<proteinExistence type="evidence at transcript level"/>
<accession>Q5RFP5</accession>
<gene>
    <name type="primary">DENR</name>
</gene>
<sequence>MAADISESSGADCNGDPRNSAKLDADYPLRVLYCGVCSLPTEYCEYMPDVAKCRQWLEKNFPNEFAKLTVENSPKQEAGISEGQGTAGEEEEKKKQKRGGRGQIKQKKKTVPQKVTIAKIPRAKKKYVTRVCGLATFEIDLKEAQRFFAQKFSCGASVTGEDEIIIQGDFTDDIIDVIQEKWPEVVDDSIEDLGEVKK</sequence>
<name>DENR_PONAB</name>
<dbReference type="EMBL" id="CR857108">
    <property type="protein sequence ID" value="CAH89412.1"/>
    <property type="molecule type" value="mRNA"/>
</dbReference>
<dbReference type="RefSeq" id="NP_001124595.1">
    <property type="nucleotide sequence ID" value="NM_001131123.1"/>
</dbReference>
<dbReference type="SMR" id="Q5RFP5"/>
<dbReference type="FunCoup" id="Q5RFP5">
    <property type="interactions" value="792"/>
</dbReference>
<dbReference type="STRING" id="9601.ENSPPYP00000005779"/>
<dbReference type="GeneID" id="100171431"/>
<dbReference type="KEGG" id="pon:100171431"/>
<dbReference type="CTD" id="8562"/>
<dbReference type="eggNOG" id="KOG3239">
    <property type="taxonomic scope" value="Eukaryota"/>
</dbReference>
<dbReference type="InParanoid" id="Q5RFP5"/>
<dbReference type="OrthoDB" id="277199at2759"/>
<dbReference type="Proteomes" id="UP000001595">
    <property type="component" value="Unplaced"/>
</dbReference>
<dbReference type="GO" id="GO:0005737">
    <property type="term" value="C:cytoplasm"/>
    <property type="evidence" value="ECO:0000250"/>
    <property type="project" value="UniProtKB"/>
</dbReference>
<dbReference type="GO" id="GO:0003729">
    <property type="term" value="F:mRNA binding"/>
    <property type="evidence" value="ECO:0007669"/>
    <property type="project" value="TreeGrafter"/>
</dbReference>
<dbReference type="GO" id="GO:0003743">
    <property type="term" value="F:translation initiation factor activity"/>
    <property type="evidence" value="ECO:0007669"/>
    <property type="project" value="UniProtKB-KW"/>
</dbReference>
<dbReference type="GO" id="GO:0001731">
    <property type="term" value="P:formation of translation preinitiation complex"/>
    <property type="evidence" value="ECO:0007669"/>
    <property type="project" value="TreeGrafter"/>
</dbReference>
<dbReference type="GO" id="GO:0002188">
    <property type="term" value="P:translation reinitiation"/>
    <property type="evidence" value="ECO:0007669"/>
    <property type="project" value="TreeGrafter"/>
</dbReference>
<dbReference type="CDD" id="cd11607">
    <property type="entry name" value="DENR_C"/>
    <property type="match status" value="1"/>
</dbReference>
<dbReference type="FunFam" id="3.30.780.10:FF:000004">
    <property type="entry name" value="density-regulated protein-like"/>
    <property type="match status" value="1"/>
</dbReference>
<dbReference type="Gene3D" id="3.30.780.10">
    <property type="entry name" value="SUI1-like domain"/>
    <property type="match status" value="1"/>
</dbReference>
<dbReference type="InterPro" id="IPR050318">
    <property type="entry name" value="DENR/SUI1_TIF"/>
</dbReference>
<dbReference type="InterPro" id="IPR046447">
    <property type="entry name" value="DENR_C"/>
</dbReference>
<dbReference type="InterPro" id="IPR005873">
    <property type="entry name" value="DENR_eukaryotes"/>
</dbReference>
<dbReference type="InterPro" id="IPR048517">
    <property type="entry name" value="DENR_N"/>
</dbReference>
<dbReference type="InterPro" id="IPR001950">
    <property type="entry name" value="SUI1"/>
</dbReference>
<dbReference type="InterPro" id="IPR036877">
    <property type="entry name" value="SUI1_dom_sf"/>
</dbReference>
<dbReference type="NCBIfam" id="TIGR01159">
    <property type="entry name" value="DRP1"/>
    <property type="match status" value="1"/>
</dbReference>
<dbReference type="PANTHER" id="PTHR12789:SF0">
    <property type="entry name" value="DENSITY-REGULATED PROTEIN"/>
    <property type="match status" value="1"/>
</dbReference>
<dbReference type="PANTHER" id="PTHR12789">
    <property type="entry name" value="DENSITY-REGULATED PROTEIN HOMOLOG"/>
    <property type="match status" value="1"/>
</dbReference>
<dbReference type="Pfam" id="PF21023">
    <property type="entry name" value="DENR_N"/>
    <property type="match status" value="1"/>
</dbReference>
<dbReference type="Pfam" id="PF01253">
    <property type="entry name" value="SUI1"/>
    <property type="match status" value="1"/>
</dbReference>
<dbReference type="SUPFAM" id="SSF55159">
    <property type="entry name" value="eIF1-like"/>
    <property type="match status" value="1"/>
</dbReference>
<dbReference type="PROSITE" id="PS50296">
    <property type="entry name" value="SUI1"/>
    <property type="match status" value="1"/>
</dbReference>
<organism>
    <name type="scientific">Pongo abelii</name>
    <name type="common">Sumatran orangutan</name>
    <name type="synonym">Pongo pygmaeus abelii</name>
    <dbReference type="NCBI Taxonomy" id="9601"/>
    <lineage>
        <taxon>Eukaryota</taxon>
        <taxon>Metazoa</taxon>
        <taxon>Chordata</taxon>
        <taxon>Craniata</taxon>
        <taxon>Vertebrata</taxon>
        <taxon>Euteleostomi</taxon>
        <taxon>Mammalia</taxon>
        <taxon>Eutheria</taxon>
        <taxon>Euarchontoglires</taxon>
        <taxon>Primates</taxon>
        <taxon>Haplorrhini</taxon>
        <taxon>Catarrhini</taxon>
        <taxon>Hominidae</taxon>
        <taxon>Pongo</taxon>
    </lineage>
</organism>
<evidence type="ECO:0000250" key="1">
    <source>
        <dbReference type="UniProtKB" id="O43583"/>
    </source>
</evidence>
<evidence type="ECO:0000250" key="2">
    <source>
        <dbReference type="UniProtKB" id="Q9CQJ6"/>
    </source>
</evidence>
<evidence type="ECO:0000255" key="3">
    <source>
        <dbReference type="PROSITE-ProRule" id="PRU00200"/>
    </source>
</evidence>
<evidence type="ECO:0000256" key="4">
    <source>
        <dbReference type="SAM" id="MobiDB-lite"/>
    </source>
</evidence>
<evidence type="ECO:0000305" key="5"/>
<reference key="1">
    <citation type="submission" date="2004-11" db="EMBL/GenBank/DDBJ databases">
        <authorList>
            <consortium name="The German cDNA consortium"/>
        </authorList>
    </citation>
    <scope>NUCLEOTIDE SEQUENCE [LARGE SCALE MRNA]</scope>
    <source>
        <tissue>Kidney</tissue>
    </source>
</reference>
<keyword id="KW-0007">Acetylation</keyword>
<keyword id="KW-0963">Cytoplasm</keyword>
<keyword id="KW-0396">Initiation factor</keyword>
<keyword id="KW-0597">Phosphoprotein</keyword>
<keyword id="KW-0648">Protein biosynthesis</keyword>
<keyword id="KW-1185">Reference proteome</keyword>
<protein>
    <recommendedName>
        <fullName>Density-regulated protein</fullName>
        <shortName>DRP</shortName>
    </recommendedName>
</protein>
<comment type="function">
    <text evidence="1">Translation regulator forming a complex with MCTS1 to promote translation reinitiation. Translation reinitiation is the process where the small ribosomal subunit remains attached to the mRNA following termination of translation of a regulatory upstream ORF (uORF), and resume scanning on the same mRNA molecule to initiate translation of a downstream ORF, usually the main ORF (mORF). The MCTS1/DENR complex is pivotal to two linked mechanisms essential for translation reinitiation. Firstly, the dissociation of deacylated tRNAs from post-termination 40S ribosomal complexes during ribosome recycling. Secondly, the recruitment in an EIF2-independent manner of aminoacylated initiator tRNA to P site of 40S ribosomes for a new round of translation. This regulatory mechanism governs the translation of more than 150 genes which translation reinitiation is MCTS1/DENR complex-dependent.</text>
</comment>
<comment type="subunit">
    <text evidence="1">Interacts with MCTS1 (via PUA domain); the complex regulates translation reinitiation.</text>
</comment>
<comment type="subcellular location">
    <subcellularLocation>
        <location evidence="1">Cytoplasm</location>
    </subcellularLocation>
</comment>
<comment type="similarity">
    <text evidence="5">Belongs to the DENR family.</text>
</comment>
<feature type="initiator methionine" description="Removed" evidence="1">
    <location>
        <position position="1"/>
    </location>
</feature>
<feature type="chain" id="PRO_0000130602" description="Density-regulated protein">
    <location>
        <begin position="2"/>
        <end position="198"/>
    </location>
</feature>
<feature type="domain" description="SUI1" evidence="3">
    <location>
        <begin position="115"/>
        <end position="182"/>
    </location>
</feature>
<feature type="region of interest" description="Disordered" evidence="4">
    <location>
        <begin position="1"/>
        <end position="20"/>
    </location>
</feature>
<feature type="region of interest" description="Disordered" evidence="4">
    <location>
        <begin position="72"/>
        <end position="110"/>
    </location>
</feature>
<feature type="compositionally biased region" description="Polar residues" evidence="4">
    <location>
        <begin position="1"/>
        <end position="11"/>
    </location>
</feature>
<feature type="compositionally biased region" description="Basic residues" evidence="4">
    <location>
        <begin position="95"/>
        <end position="110"/>
    </location>
</feature>
<feature type="modified residue" description="N-acetylalanine" evidence="1">
    <location>
        <position position="2"/>
    </location>
</feature>
<feature type="modified residue" description="Phosphoserine" evidence="1">
    <location>
        <position position="20"/>
    </location>
</feature>
<feature type="modified residue" description="Phosphoserine" evidence="1">
    <location>
        <position position="73"/>
    </location>
</feature>
<feature type="modified residue" description="Phosphothreonine" evidence="1">
    <location>
        <position position="86"/>
    </location>
</feature>
<feature type="modified residue" description="Phosphoserine" evidence="2">
    <location>
        <position position="189"/>
    </location>
</feature>